<feature type="chain" id="PRO_1000005680" description="Cytidylate kinase">
    <location>
        <begin position="1"/>
        <end position="172"/>
    </location>
</feature>
<feature type="binding site" evidence="1">
    <location>
        <begin position="7"/>
        <end position="15"/>
    </location>
    <ligand>
        <name>ATP</name>
        <dbReference type="ChEBI" id="CHEBI:30616"/>
    </ligand>
</feature>
<organism>
    <name type="scientific">Methanothrix thermoacetophila (strain DSM 6194 / JCM 14653 / NBRC 101360 / PT)</name>
    <name type="common">Methanosaeta thermophila</name>
    <dbReference type="NCBI Taxonomy" id="349307"/>
    <lineage>
        <taxon>Archaea</taxon>
        <taxon>Methanobacteriati</taxon>
        <taxon>Methanobacteriota</taxon>
        <taxon>Stenosarchaea group</taxon>
        <taxon>Methanomicrobia</taxon>
        <taxon>Methanotrichales</taxon>
        <taxon>Methanotrichaceae</taxon>
        <taxon>Methanothrix</taxon>
    </lineage>
</organism>
<name>KCY_METTP</name>
<gene>
    <name evidence="1" type="primary">cmk</name>
    <name type="ordered locus">Mthe_1703</name>
</gene>
<comment type="catalytic activity">
    <reaction evidence="1">
        <text>CMP + ATP = CDP + ADP</text>
        <dbReference type="Rhea" id="RHEA:11600"/>
        <dbReference type="ChEBI" id="CHEBI:30616"/>
        <dbReference type="ChEBI" id="CHEBI:58069"/>
        <dbReference type="ChEBI" id="CHEBI:60377"/>
        <dbReference type="ChEBI" id="CHEBI:456216"/>
        <dbReference type="EC" id="2.7.4.25"/>
    </reaction>
</comment>
<comment type="catalytic activity">
    <reaction evidence="1">
        <text>dCMP + ATP = dCDP + ADP</text>
        <dbReference type="Rhea" id="RHEA:25094"/>
        <dbReference type="ChEBI" id="CHEBI:30616"/>
        <dbReference type="ChEBI" id="CHEBI:57566"/>
        <dbReference type="ChEBI" id="CHEBI:58593"/>
        <dbReference type="ChEBI" id="CHEBI:456216"/>
        <dbReference type="EC" id="2.7.4.25"/>
    </reaction>
</comment>
<comment type="subcellular location">
    <subcellularLocation>
        <location evidence="1">Cytoplasm</location>
    </subcellularLocation>
</comment>
<comment type="similarity">
    <text evidence="1">Belongs to the cytidylate kinase family. Type 2 subfamily.</text>
</comment>
<sequence length="172" mass="19012">MIITISGPPGSGTSTLARGLSEVLGVRWVNSGDLFRRIAAERGLSLKELGRLAEQGPEIDYLIDDAQRSLAKSGSGIFEGRLAGHMLDADLKIMLKTSLSVRASRIAKRENKSIEEALSEARAREECEARRYKMYYNIDINDLSIYDLIIDTGRWDERGTLSIALAAIRALK</sequence>
<accession>A0B9U5</accession>
<dbReference type="EC" id="2.7.4.25" evidence="1"/>
<dbReference type="EMBL" id="CP000477">
    <property type="protein sequence ID" value="ABK15469.1"/>
    <property type="molecule type" value="Genomic_DNA"/>
</dbReference>
<dbReference type="RefSeq" id="WP_011696847.1">
    <property type="nucleotide sequence ID" value="NC_008553.1"/>
</dbReference>
<dbReference type="SMR" id="A0B9U5"/>
<dbReference type="STRING" id="349307.Mthe_1703"/>
<dbReference type="GeneID" id="4462663"/>
<dbReference type="KEGG" id="mtp:Mthe_1703"/>
<dbReference type="HOGENOM" id="CLU_079959_1_0_2"/>
<dbReference type="OrthoDB" id="31096at2157"/>
<dbReference type="Proteomes" id="UP000000674">
    <property type="component" value="Chromosome"/>
</dbReference>
<dbReference type="GO" id="GO:0005737">
    <property type="term" value="C:cytoplasm"/>
    <property type="evidence" value="ECO:0007669"/>
    <property type="project" value="UniProtKB-SubCell"/>
</dbReference>
<dbReference type="GO" id="GO:0005524">
    <property type="term" value="F:ATP binding"/>
    <property type="evidence" value="ECO:0007669"/>
    <property type="project" value="UniProtKB-UniRule"/>
</dbReference>
<dbReference type="GO" id="GO:0036430">
    <property type="term" value="F:CMP kinase activity"/>
    <property type="evidence" value="ECO:0007669"/>
    <property type="project" value="RHEA"/>
</dbReference>
<dbReference type="GO" id="GO:0036431">
    <property type="term" value="F:dCMP kinase activity"/>
    <property type="evidence" value="ECO:0007669"/>
    <property type="project" value="RHEA"/>
</dbReference>
<dbReference type="GO" id="GO:0006220">
    <property type="term" value="P:pyrimidine nucleotide metabolic process"/>
    <property type="evidence" value="ECO:0007669"/>
    <property type="project" value="UniProtKB-UniRule"/>
</dbReference>
<dbReference type="CDD" id="cd02020">
    <property type="entry name" value="CMPK"/>
    <property type="match status" value="1"/>
</dbReference>
<dbReference type="Gene3D" id="3.40.50.300">
    <property type="entry name" value="P-loop containing nucleotide triphosphate hydrolases"/>
    <property type="match status" value="1"/>
</dbReference>
<dbReference type="HAMAP" id="MF_00239">
    <property type="entry name" value="Cytidyl_kinase_type2"/>
    <property type="match status" value="1"/>
</dbReference>
<dbReference type="InterPro" id="IPR011892">
    <property type="entry name" value="Cyt_kin_arch"/>
</dbReference>
<dbReference type="InterPro" id="IPR011994">
    <property type="entry name" value="Cytidylate_kinase_dom"/>
</dbReference>
<dbReference type="InterPro" id="IPR027417">
    <property type="entry name" value="P-loop_NTPase"/>
</dbReference>
<dbReference type="NCBIfam" id="TIGR02173">
    <property type="entry name" value="cyt_kin_arch"/>
    <property type="match status" value="1"/>
</dbReference>
<dbReference type="Pfam" id="PF13189">
    <property type="entry name" value="Cytidylate_kin2"/>
    <property type="match status" value="1"/>
</dbReference>
<dbReference type="SUPFAM" id="SSF52540">
    <property type="entry name" value="P-loop containing nucleoside triphosphate hydrolases"/>
    <property type="match status" value="1"/>
</dbReference>
<protein>
    <recommendedName>
        <fullName evidence="1">Cytidylate kinase</fullName>
        <shortName evidence="1">CK</shortName>
        <ecNumber evidence="1">2.7.4.25</ecNumber>
    </recommendedName>
    <alternativeName>
        <fullName evidence="1">Cytidine monophosphate kinase</fullName>
        <shortName evidence="1">CMP kinase</shortName>
    </alternativeName>
</protein>
<keyword id="KW-0067">ATP-binding</keyword>
<keyword id="KW-0963">Cytoplasm</keyword>
<keyword id="KW-0418">Kinase</keyword>
<keyword id="KW-0547">Nucleotide-binding</keyword>
<keyword id="KW-1185">Reference proteome</keyword>
<keyword id="KW-0808">Transferase</keyword>
<reference key="1">
    <citation type="submission" date="2006-10" db="EMBL/GenBank/DDBJ databases">
        <title>Complete sequence of Methanosaeta thermophila PT.</title>
        <authorList>
            <consortium name="US DOE Joint Genome Institute"/>
            <person name="Copeland A."/>
            <person name="Lucas S."/>
            <person name="Lapidus A."/>
            <person name="Barry K."/>
            <person name="Detter J.C."/>
            <person name="Glavina del Rio T."/>
            <person name="Hammon N."/>
            <person name="Israni S."/>
            <person name="Pitluck S."/>
            <person name="Chain P."/>
            <person name="Malfatti S."/>
            <person name="Shin M."/>
            <person name="Vergez L."/>
            <person name="Schmutz J."/>
            <person name="Larimer F."/>
            <person name="Land M."/>
            <person name="Hauser L."/>
            <person name="Kyrpides N."/>
            <person name="Kim E."/>
            <person name="Smith K.S."/>
            <person name="Ingram-Smith C."/>
            <person name="Richardson P."/>
        </authorList>
    </citation>
    <scope>NUCLEOTIDE SEQUENCE [LARGE SCALE GENOMIC DNA]</scope>
    <source>
        <strain>DSM 6194 / JCM 14653 / NBRC 101360 / PT</strain>
    </source>
</reference>
<proteinExistence type="inferred from homology"/>
<evidence type="ECO:0000255" key="1">
    <source>
        <dbReference type="HAMAP-Rule" id="MF_00239"/>
    </source>
</evidence>